<comment type="function">
    <text evidence="2">Cell wall formation.</text>
</comment>
<comment type="catalytic activity">
    <reaction evidence="2">
        <text>2 D-alanine + ATP = D-alanyl-D-alanine + ADP + phosphate + H(+)</text>
        <dbReference type="Rhea" id="RHEA:11224"/>
        <dbReference type="ChEBI" id="CHEBI:15378"/>
        <dbReference type="ChEBI" id="CHEBI:30616"/>
        <dbReference type="ChEBI" id="CHEBI:43474"/>
        <dbReference type="ChEBI" id="CHEBI:57416"/>
        <dbReference type="ChEBI" id="CHEBI:57822"/>
        <dbReference type="ChEBI" id="CHEBI:456216"/>
        <dbReference type="EC" id="6.3.2.4"/>
    </reaction>
</comment>
<comment type="cofactor">
    <cofactor evidence="1">
        <name>Mg(2+)</name>
        <dbReference type="ChEBI" id="CHEBI:18420"/>
    </cofactor>
    <cofactor evidence="1">
        <name>Mn(2+)</name>
        <dbReference type="ChEBI" id="CHEBI:29035"/>
    </cofactor>
    <text evidence="1">Binds 2 magnesium or manganese ions per subunit.</text>
</comment>
<comment type="pathway">
    <text evidence="2">Cell wall biogenesis; peptidoglycan biosynthesis.</text>
</comment>
<comment type="subcellular location">
    <subcellularLocation>
        <location evidence="2">Cytoplasm</location>
    </subcellularLocation>
</comment>
<comment type="similarity">
    <text evidence="2">Belongs to the D-alanine--D-alanine ligase family.</text>
</comment>
<name>DDL_RUEPO</name>
<proteinExistence type="inferred from homology"/>
<protein>
    <recommendedName>
        <fullName evidence="2">D-alanine--D-alanine ligase</fullName>
        <ecNumber evidence="2">6.3.2.4</ecNumber>
    </recommendedName>
    <alternativeName>
        <fullName evidence="2">D-Ala-D-Ala ligase</fullName>
    </alternativeName>
    <alternativeName>
        <fullName evidence="2">D-alanylalanine synthetase</fullName>
    </alternativeName>
</protein>
<gene>
    <name evidence="2" type="primary">ddl</name>
    <name type="ordered locus">SPO1201</name>
</gene>
<accession>Q5LU57</accession>
<evidence type="ECO:0000250" key="1"/>
<evidence type="ECO:0000255" key="2">
    <source>
        <dbReference type="HAMAP-Rule" id="MF_00047"/>
    </source>
</evidence>
<dbReference type="EC" id="6.3.2.4" evidence="2"/>
<dbReference type="EMBL" id="CP000031">
    <property type="protein sequence ID" value="AAV94497.1"/>
    <property type="molecule type" value="Genomic_DNA"/>
</dbReference>
<dbReference type="RefSeq" id="WP_011046944.1">
    <property type="nucleotide sequence ID" value="NC_003911.12"/>
</dbReference>
<dbReference type="SMR" id="Q5LU57"/>
<dbReference type="STRING" id="246200.SPO1201"/>
<dbReference type="PaxDb" id="246200-SPO1201"/>
<dbReference type="KEGG" id="sil:SPO1201"/>
<dbReference type="eggNOG" id="COG1181">
    <property type="taxonomic scope" value="Bacteria"/>
</dbReference>
<dbReference type="HOGENOM" id="CLU_039268_1_1_5"/>
<dbReference type="OrthoDB" id="9813261at2"/>
<dbReference type="UniPathway" id="UPA00219"/>
<dbReference type="Proteomes" id="UP000001023">
    <property type="component" value="Chromosome"/>
</dbReference>
<dbReference type="GO" id="GO:0005737">
    <property type="term" value="C:cytoplasm"/>
    <property type="evidence" value="ECO:0007669"/>
    <property type="project" value="UniProtKB-SubCell"/>
</dbReference>
<dbReference type="GO" id="GO:0005524">
    <property type="term" value="F:ATP binding"/>
    <property type="evidence" value="ECO:0007669"/>
    <property type="project" value="UniProtKB-KW"/>
</dbReference>
<dbReference type="GO" id="GO:0008716">
    <property type="term" value="F:D-alanine-D-alanine ligase activity"/>
    <property type="evidence" value="ECO:0007669"/>
    <property type="project" value="UniProtKB-UniRule"/>
</dbReference>
<dbReference type="GO" id="GO:0046872">
    <property type="term" value="F:metal ion binding"/>
    <property type="evidence" value="ECO:0007669"/>
    <property type="project" value="UniProtKB-KW"/>
</dbReference>
<dbReference type="GO" id="GO:0071555">
    <property type="term" value="P:cell wall organization"/>
    <property type="evidence" value="ECO:0007669"/>
    <property type="project" value="UniProtKB-KW"/>
</dbReference>
<dbReference type="GO" id="GO:0009252">
    <property type="term" value="P:peptidoglycan biosynthetic process"/>
    <property type="evidence" value="ECO:0007669"/>
    <property type="project" value="UniProtKB-UniRule"/>
</dbReference>
<dbReference type="GO" id="GO:0008360">
    <property type="term" value="P:regulation of cell shape"/>
    <property type="evidence" value="ECO:0007669"/>
    <property type="project" value="UniProtKB-KW"/>
</dbReference>
<dbReference type="Gene3D" id="3.40.50.20">
    <property type="match status" value="1"/>
</dbReference>
<dbReference type="Gene3D" id="3.30.1490.20">
    <property type="entry name" value="ATP-grasp fold, A domain"/>
    <property type="match status" value="1"/>
</dbReference>
<dbReference type="Gene3D" id="3.30.470.20">
    <property type="entry name" value="ATP-grasp fold, B domain"/>
    <property type="match status" value="1"/>
</dbReference>
<dbReference type="HAMAP" id="MF_00047">
    <property type="entry name" value="Dala_Dala_lig"/>
    <property type="match status" value="1"/>
</dbReference>
<dbReference type="InterPro" id="IPR011761">
    <property type="entry name" value="ATP-grasp"/>
</dbReference>
<dbReference type="InterPro" id="IPR013815">
    <property type="entry name" value="ATP_grasp_subdomain_1"/>
</dbReference>
<dbReference type="InterPro" id="IPR000291">
    <property type="entry name" value="D-Ala_lig_Van_CS"/>
</dbReference>
<dbReference type="InterPro" id="IPR005905">
    <property type="entry name" value="D_ala_D_ala"/>
</dbReference>
<dbReference type="InterPro" id="IPR011095">
    <property type="entry name" value="Dala_Dala_lig_C"/>
</dbReference>
<dbReference type="InterPro" id="IPR011127">
    <property type="entry name" value="Dala_Dala_lig_N"/>
</dbReference>
<dbReference type="InterPro" id="IPR016185">
    <property type="entry name" value="PreATP-grasp_dom_sf"/>
</dbReference>
<dbReference type="NCBIfam" id="TIGR01205">
    <property type="entry name" value="D_ala_D_alaTIGR"/>
    <property type="match status" value="1"/>
</dbReference>
<dbReference type="NCBIfam" id="NF002378">
    <property type="entry name" value="PRK01372.1"/>
    <property type="match status" value="1"/>
</dbReference>
<dbReference type="PANTHER" id="PTHR23132">
    <property type="entry name" value="D-ALANINE--D-ALANINE LIGASE"/>
    <property type="match status" value="1"/>
</dbReference>
<dbReference type="PANTHER" id="PTHR23132:SF23">
    <property type="entry name" value="D-ALANINE--D-ALANINE LIGASE B"/>
    <property type="match status" value="1"/>
</dbReference>
<dbReference type="Pfam" id="PF07478">
    <property type="entry name" value="Dala_Dala_lig_C"/>
    <property type="match status" value="1"/>
</dbReference>
<dbReference type="Pfam" id="PF01820">
    <property type="entry name" value="Dala_Dala_lig_N"/>
    <property type="match status" value="1"/>
</dbReference>
<dbReference type="PIRSF" id="PIRSF039102">
    <property type="entry name" value="Ddl/VanB"/>
    <property type="match status" value="1"/>
</dbReference>
<dbReference type="SUPFAM" id="SSF56059">
    <property type="entry name" value="Glutathione synthetase ATP-binding domain-like"/>
    <property type="match status" value="1"/>
</dbReference>
<dbReference type="SUPFAM" id="SSF52440">
    <property type="entry name" value="PreATP-grasp domain"/>
    <property type="match status" value="1"/>
</dbReference>
<dbReference type="PROSITE" id="PS50975">
    <property type="entry name" value="ATP_GRASP"/>
    <property type="match status" value="1"/>
</dbReference>
<dbReference type="PROSITE" id="PS00843">
    <property type="entry name" value="DALA_DALA_LIGASE_1"/>
    <property type="match status" value="1"/>
</dbReference>
<dbReference type="PROSITE" id="PS00844">
    <property type="entry name" value="DALA_DALA_LIGASE_2"/>
    <property type="match status" value="1"/>
</dbReference>
<sequence>MGMSSRTNPKVAVLMGGPSAEREVSLVSGRECAAALRGEGFEVVELDAGSDLCDRLRASAPDVVFNALHGRWGEDGCVQGLLEWLRIPYTSSGVLASALAMDKERSKEAYRAAGLPVAASQLADRAAIEAAHVMQPPYVVKPYNEGSSVGVYIVTEAANGPPVLAPDLPATLMVEEYVPGRELSTTVLGDRALNVTDIITDGWYDYHAKYSPGGSRHVIPADLPPEIFELCLDYALRAHKALGCRGLSRTDFRWDESRGAAGLFLLETNTQPGMTPTSLAPEQALAAGMSFGQLCAWMVEDASCDR</sequence>
<feature type="chain" id="PRO_0000341173" description="D-alanine--D-alanine ligase">
    <location>
        <begin position="1"/>
        <end position="306"/>
    </location>
</feature>
<feature type="domain" description="ATP-grasp" evidence="2">
    <location>
        <begin position="107"/>
        <end position="300"/>
    </location>
</feature>
<feature type="binding site" evidence="2">
    <location>
        <begin position="134"/>
        <end position="184"/>
    </location>
    <ligand>
        <name>ATP</name>
        <dbReference type="ChEBI" id="CHEBI:30616"/>
    </ligand>
</feature>
<feature type="binding site" evidence="2">
    <location>
        <position position="251"/>
    </location>
    <ligand>
        <name>Mg(2+)</name>
        <dbReference type="ChEBI" id="CHEBI:18420"/>
        <label>1</label>
    </ligand>
</feature>
<feature type="binding site" evidence="2">
    <location>
        <position position="267"/>
    </location>
    <ligand>
        <name>Mg(2+)</name>
        <dbReference type="ChEBI" id="CHEBI:18420"/>
        <label>1</label>
    </ligand>
</feature>
<feature type="binding site" evidence="2">
    <location>
        <position position="267"/>
    </location>
    <ligand>
        <name>Mg(2+)</name>
        <dbReference type="ChEBI" id="CHEBI:18420"/>
        <label>2</label>
    </ligand>
</feature>
<feature type="binding site" evidence="2">
    <location>
        <position position="269"/>
    </location>
    <ligand>
        <name>Mg(2+)</name>
        <dbReference type="ChEBI" id="CHEBI:18420"/>
        <label>2</label>
    </ligand>
</feature>
<organism>
    <name type="scientific">Ruegeria pomeroyi (strain ATCC 700808 / DSM 15171 / DSS-3)</name>
    <name type="common">Silicibacter pomeroyi</name>
    <dbReference type="NCBI Taxonomy" id="246200"/>
    <lineage>
        <taxon>Bacteria</taxon>
        <taxon>Pseudomonadati</taxon>
        <taxon>Pseudomonadota</taxon>
        <taxon>Alphaproteobacteria</taxon>
        <taxon>Rhodobacterales</taxon>
        <taxon>Roseobacteraceae</taxon>
        <taxon>Ruegeria</taxon>
    </lineage>
</organism>
<reference key="1">
    <citation type="journal article" date="2004" name="Nature">
        <title>Genome sequence of Silicibacter pomeroyi reveals adaptations to the marine environment.</title>
        <authorList>
            <person name="Moran M.A."/>
            <person name="Buchan A."/>
            <person name="Gonzalez J.M."/>
            <person name="Heidelberg J.F."/>
            <person name="Whitman W.B."/>
            <person name="Kiene R.P."/>
            <person name="Henriksen J.R."/>
            <person name="King G.M."/>
            <person name="Belas R."/>
            <person name="Fuqua C."/>
            <person name="Brinkac L.M."/>
            <person name="Lewis M."/>
            <person name="Johri S."/>
            <person name="Weaver B."/>
            <person name="Pai G."/>
            <person name="Eisen J.A."/>
            <person name="Rahe E."/>
            <person name="Sheldon W.M."/>
            <person name="Ye W."/>
            <person name="Miller T.R."/>
            <person name="Carlton J."/>
            <person name="Rasko D.A."/>
            <person name="Paulsen I.T."/>
            <person name="Ren Q."/>
            <person name="Daugherty S.C."/>
            <person name="DeBoy R.T."/>
            <person name="Dodson R.J."/>
            <person name="Durkin A.S."/>
            <person name="Madupu R."/>
            <person name="Nelson W.C."/>
            <person name="Sullivan S.A."/>
            <person name="Rosovitz M.J."/>
            <person name="Haft D.H."/>
            <person name="Selengut J."/>
            <person name="Ward N."/>
        </authorList>
    </citation>
    <scope>NUCLEOTIDE SEQUENCE [LARGE SCALE GENOMIC DNA]</scope>
    <source>
        <strain>ATCC 700808 / DSM 15171 / DSS-3</strain>
    </source>
</reference>
<reference key="2">
    <citation type="journal article" date="2014" name="Stand. Genomic Sci.">
        <title>An updated genome annotation for the model marine bacterium Ruegeria pomeroyi DSS-3.</title>
        <authorList>
            <person name="Rivers A.R."/>
            <person name="Smith C.B."/>
            <person name="Moran M.A."/>
        </authorList>
    </citation>
    <scope>GENOME REANNOTATION</scope>
    <source>
        <strain>ATCC 700808 / DSM 15171 / DSS-3</strain>
    </source>
</reference>
<keyword id="KW-0067">ATP-binding</keyword>
<keyword id="KW-0133">Cell shape</keyword>
<keyword id="KW-0961">Cell wall biogenesis/degradation</keyword>
<keyword id="KW-0963">Cytoplasm</keyword>
<keyword id="KW-0436">Ligase</keyword>
<keyword id="KW-0460">Magnesium</keyword>
<keyword id="KW-0464">Manganese</keyword>
<keyword id="KW-0479">Metal-binding</keyword>
<keyword id="KW-0547">Nucleotide-binding</keyword>
<keyword id="KW-0573">Peptidoglycan synthesis</keyword>
<keyword id="KW-1185">Reference proteome</keyword>